<gene>
    <name evidence="1" type="primary">rplC</name>
    <name type="ordered locus">Strop_3923</name>
</gene>
<organism>
    <name type="scientific">Salinispora tropica (strain ATCC BAA-916 / DSM 44818 / JCM 13857 / NBRC 105044 / CNB-440)</name>
    <dbReference type="NCBI Taxonomy" id="369723"/>
    <lineage>
        <taxon>Bacteria</taxon>
        <taxon>Bacillati</taxon>
        <taxon>Actinomycetota</taxon>
        <taxon>Actinomycetes</taxon>
        <taxon>Micromonosporales</taxon>
        <taxon>Micromonosporaceae</taxon>
        <taxon>Salinispora</taxon>
    </lineage>
</organism>
<protein>
    <recommendedName>
        <fullName evidence="1">Large ribosomal subunit protein uL3</fullName>
    </recommendedName>
    <alternativeName>
        <fullName evidence="2">50S ribosomal protein L3</fullName>
    </alternativeName>
</protein>
<keyword id="KW-1185">Reference proteome</keyword>
<keyword id="KW-0687">Ribonucleoprotein</keyword>
<keyword id="KW-0689">Ribosomal protein</keyword>
<keyword id="KW-0694">RNA-binding</keyword>
<keyword id="KW-0699">rRNA-binding</keyword>
<comment type="function">
    <text evidence="1">One of the primary rRNA binding proteins, it binds directly near the 3'-end of the 23S rRNA, where it nucleates assembly of the 50S subunit.</text>
</comment>
<comment type="subunit">
    <text evidence="1">Part of the 50S ribosomal subunit. Forms a cluster with proteins L14 and L19.</text>
</comment>
<comment type="similarity">
    <text evidence="1">Belongs to the universal ribosomal protein uL3 family.</text>
</comment>
<reference key="1">
    <citation type="journal article" date="2007" name="Proc. Natl. Acad. Sci. U.S.A.">
        <title>Genome sequencing reveals complex secondary metabolome in the marine actinomycete Salinispora tropica.</title>
        <authorList>
            <person name="Udwary D.W."/>
            <person name="Zeigler L."/>
            <person name="Asolkar R.N."/>
            <person name="Singan V."/>
            <person name="Lapidus A."/>
            <person name="Fenical W."/>
            <person name="Jensen P.R."/>
            <person name="Moore B.S."/>
        </authorList>
    </citation>
    <scope>NUCLEOTIDE SEQUENCE [LARGE SCALE GENOMIC DNA]</scope>
    <source>
        <strain>ATCC BAA-916 / DSM 44818 / JCM 13857 / NBRC 105044 / CNB-440</strain>
    </source>
</reference>
<dbReference type="EMBL" id="CP000667">
    <property type="protein sequence ID" value="ABP56353.1"/>
    <property type="molecule type" value="Genomic_DNA"/>
</dbReference>
<dbReference type="RefSeq" id="WP_012015125.1">
    <property type="nucleotide sequence ID" value="NC_009380.1"/>
</dbReference>
<dbReference type="SMR" id="A4XBP6"/>
<dbReference type="STRING" id="369723.Strop_3923"/>
<dbReference type="KEGG" id="stp:Strop_3923"/>
<dbReference type="PATRIC" id="fig|369723.5.peg.4049"/>
<dbReference type="eggNOG" id="COG0087">
    <property type="taxonomic scope" value="Bacteria"/>
</dbReference>
<dbReference type="HOGENOM" id="CLU_044142_4_1_11"/>
<dbReference type="Proteomes" id="UP000000235">
    <property type="component" value="Chromosome"/>
</dbReference>
<dbReference type="GO" id="GO:0022625">
    <property type="term" value="C:cytosolic large ribosomal subunit"/>
    <property type="evidence" value="ECO:0007669"/>
    <property type="project" value="TreeGrafter"/>
</dbReference>
<dbReference type="GO" id="GO:0019843">
    <property type="term" value="F:rRNA binding"/>
    <property type="evidence" value="ECO:0007669"/>
    <property type="project" value="UniProtKB-UniRule"/>
</dbReference>
<dbReference type="GO" id="GO:0003735">
    <property type="term" value="F:structural constituent of ribosome"/>
    <property type="evidence" value="ECO:0007669"/>
    <property type="project" value="InterPro"/>
</dbReference>
<dbReference type="GO" id="GO:0006412">
    <property type="term" value="P:translation"/>
    <property type="evidence" value="ECO:0007669"/>
    <property type="project" value="UniProtKB-UniRule"/>
</dbReference>
<dbReference type="FunFam" id="2.40.30.10:FF:000004">
    <property type="entry name" value="50S ribosomal protein L3"/>
    <property type="match status" value="1"/>
</dbReference>
<dbReference type="FunFam" id="3.30.160.810:FF:000001">
    <property type="entry name" value="50S ribosomal protein L3"/>
    <property type="match status" value="1"/>
</dbReference>
<dbReference type="Gene3D" id="3.30.160.810">
    <property type="match status" value="1"/>
</dbReference>
<dbReference type="Gene3D" id="2.40.30.10">
    <property type="entry name" value="Translation factors"/>
    <property type="match status" value="1"/>
</dbReference>
<dbReference type="HAMAP" id="MF_01325_B">
    <property type="entry name" value="Ribosomal_uL3_B"/>
    <property type="match status" value="1"/>
</dbReference>
<dbReference type="InterPro" id="IPR000597">
    <property type="entry name" value="Ribosomal_uL3"/>
</dbReference>
<dbReference type="InterPro" id="IPR019927">
    <property type="entry name" value="Ribosomal_uL3_bac/org-type"/>
</dbReference>
<dbReference type="InterPro" id="IPR019926">
    <property type="entry name" value="Ribosomal_uL3_CS"/>
</dbReference>
<dbReference type="InterPro" id="IPR009000">
    <property type="entry name" value="Transl_B-barrel_sf"/>
</dbReference>
<dbReference type="NCBIfam" id="TIGR03625">
    <property type="entry name" value="L3_bact"/>
    <property type="match status" value="1"/>
</dbReference>
<dbReference type="PANTHER" id="PTHR11229">
    <property type="entry name" value="50S RIBOSOMAL PROTEIN L3"/>
    <property type="match status" value="1"/>
</dbReference>
<dbReference type="PANTHER" id="PTHR11229:SF16">
    <property type="entry name" value="LARGE RIBOSOMAL SUBUNIT PROTEIN UL3C"/>
    <property type="match status" value="1"/>
</dbReference>
<dbReference type="Pfam" id="PF00297">
    <property type="entry name" value="Ribosomal_L3"/>
    <property type="match status" value="1"/>
</dbReference>
<dbReference type="SUPFAM" id="SSF50447">
    <property type="entry name" value="Translation proteins"/>
    <property type="match status" value="1"/>
</dbReference>
<dbReference type="PROSITE" id="PS00474">
    <property type="entry name" value="RIBOSOMAL_L3"/>
    <property type="match status" value="1"/>
</dbReference>
<evidence type="ECO:0000255" key="1">
    <source>
        <dbReference type="HAMAP-Rule" id="MF_01325"/>
    </source>
</evidence>
<evidence type="ECO:0000305" key="2"/>
<feature type="chain" id="PRO_0000353615" description="Large ribosomal subunit protein uL3">
    <location>
        <begin position="1"/>
        <end position="219"/>
    </location>
</feature>
<sequence length="219" mass="23176">MDRQVKGILGAKLGMTQVWDNNRVVPVTVVQAGPCVVSQVRSQEKDGYAAVQLAYGAIDPRKVKKPISGHYAKADVAPRRHIVELRTTDAGEYSSGQEVTVEEFPAGISVDVTGKTKGKGYAGPMKRHGFHGLRASHGVERKHRSPGSIGGCATPGRVFKGTRMAGRMGGVRYTVQNLTVQAVDTENNLLLVRGAIPGPKGALVLVRTAAKAKKGGAAK</sequence>
<name>RL3_SALTO</name>
<accession>A4XBP6</accession>
<proteinExistence type="inferred from homology"/>